<accession>Q49410</accession>
<proteinExistence type="evidence at protein level"/>
<sequence length="368" mass="42258">MLFKKFTWVIPSLFLTIISTSLLISCATKSDNTLIFNISLDHNADTSIEKFFTVFSKKLSGKLNKKINVNFNIVDDSFTKINNIQANKADFAFVNSQAIASNNWFGYTPLIQTLTTAFKEDLELDYYEDGNLQKKAEKTNLLFLSPPYKEWDDIKQKWTGNRYDFLYEPSKLVSFYRSMILITGSASEITAIKKAWNEKNWNQFMKFGIGHGQTNSASRFELPDLLFRKHFAKNYPGLQNAINSDPDKFAVVRGREIGINKNIKIVFDDANSFSWTQNIKGSKRPFYTPIDPNDRLEILTYSDPLLYDIGIVSNNLSRIYQKAIGEIFIELAQSSEDLYGPSIGYNGYKMINDFEKEVVEIIEKTYGK</sequence>
<reference key="1">
    <citation type="journal article" date="1995" name="Science">
        <title>The minimal gene complement of Mycoplasma genitalium.</title>
        <authorList>
            <person name="Fraser C.M."/>
            <person name="Gocayne J.D."/>
            <person name="White O."/>
            <person name="Adams M.D."/>
            <person name="Clayton R.A."/>
            <person name="Fleischmann R.D."/>
            <person name="Bult C.J."/>
            <person name="Kerlavage A.R."/>
            <person name="Sutton G.G."/>
            <person name="Kelley J.M."/>
            <person name="Fritchman J.L."/>
            <person name="Weidman J.F."/>
            <person name="Small K.V."/>
            <person name="Sandusky M."/>
            <person name="Fuhrmann J.L."/>
            <person name="Nguyen D.T."/>
            <person name="Utterback T.R."/>
            <person name="Saudek D.M."/>
            <person name="Phillips C.A."/>
            <person name="Merrick J.M."/>
            <person name="Tomb J.-F."/>
            <person name="Dougherty B.A."/>
            <person name="Bott K.F."/>
            <person name="Hu P.-C."/>
            <person name="Lucier T.S."/>
            <person name="Peterson S.N."/>
            <person name="Smith H.O."/>
            <person name="Hutchison C.A. III"/>
            <person name="Venter J.C."/>
        </authorList>
    </citation>
    <scope>NUCLEOTIDE SEQUENCE [LARGE SCALE GENOMIC DNA]</scope>
    <source>
        <strain>ATCC 33530 / DSM 19775 / NCTC 10195 / G37</strain>
    </source>
</reference>
<keyword id="KW-0002">3D-structure</keyword>
<keyword id="KW-1003">Cell membrane</keyword>
<keyword id="KW-0449">Lipoprotein</keyword>
<keyword id="KW-0472">Membrane</keyword>
<keyword id="KW-0564">Palmitate</keyword>
<keyword id="KW-1185">Reference proteome</keyword>
<keyword id="KW-0732">Signal</keyword>
<keyword id="KW-0813">Transport</keyword>
<evidence type="ECO:0000255" key="1">
    <source>
        <dbReference type="PROSITE-ProRule" id="PRU00303"/>
    </source>
</evidence>
<evidence type="ECO:0000305" key="2"/>
<evidence type="ECO:0007829" key="3">
    <source>
        <dbReference type="PDB" id="3MYU"/>
    </source>
</evidence>
<protein>
    <recommendedName>
        <fullName>High affinity transport system protein p37</fullName>
    </recommendedName>
</protein>
<dbReference type="EMBL" id="L43967">
    <property type="protein sequence ID" value="AAC71510.1"/>
    <property type="molecule type" value="Genomic_DNA"/>
</dbReference>
<dbReference type="PIR" id="I64231">
    <property type="entry name" value="I64231"/>
</dbReference>
<dbReference type="RefSeq" id="WP_009885873.1">
    <property type="nucleotide sequence ID" value="NC_000908.2"/>
</dbReference>
<dbReference type="PDB" id="3MYU">
    <property type="method" value="X-ray"/>
    <property type="resolution" value="1.95 A"/>
    <property type="chains" value="A/B=26-368"/>
</dbReference>
<dbReference type="PDBsum" id="3MYU"/>
<dbReference type="SMR" id="Q49410"/>
<dbReference type="STRING" id="243273.MG_289"/>
<dbReference type="GeneID" id="88282451"/>
<dbReference type="KEGG" id="mge:MG_289"/>
<dbReference type="eggNOG" id="ENOG5031Y7G">
    <property type="taxonomic scope" value="Bacteria"/>
</dbReference>
<dbReference type="HOGENOM" id="CLU_055613_0_0_14"/>
<dbReference type="InParanoid" id="Q49410"/>
<dbReference type="OrthoDB" id="401239at2"/>
<dbReference type="BioCyc" id="MGEN243273:G1GJ2-357-MONOMER"/>
<dbReference type="EvolutionaryTrace" id="Q49410"/>
<dbReference type="Proteomes" id="UP000000807">
    <property type="component" value="Chromosome"/>
</dbReference>
<dbReference type="GO" id="GO:0005886">
    <property type="term" value="C:plasma membrane"/>
    <property type="evidence" value="ECO:0007669"/>
    <property type="project" value="UniProtKB-SubCell"/>
</dbReference>
<dbReference type="Gene3D" id="3.40.190.190">
    <property type="entry name" value="CypI, domain 2"/>
    <property type="match status" value="1"/>
</dbReference>
<dbReference type="Gene3D" id="3.40.190.180">
    <property type="entry name" value="Cypl, domain I"/>
    <property type="match status" value="1"/>
</dbReference>
<dbReference type="InterPro" id="IPR010592">
    <property type="entry name" value="CypI"/>
</dbReference>
<dbReference type="InterPro" id="IPR043099">
    <property type="entry name" value="CypI_dom_I"/>
</dbReference>
<dbReference type="InterPro" id="IPR043100">
    <property type="entry name" value="CypI_dom_II"/>
</dbReference>
<dbReference type="NCBIfam" id="NF045838">
    <property type="entry name" value="MG289_thiam_LP"/>
    <property type="match status" value="1"/>
</dbReference>
<dbReference type="Pfam" id="PF06646">
    <property type="entry name" value="CypI"/>
    <property type="match status" value="1"/>
</dbReference>
<dbReference type="PIRSF" id="PIRSF004523">
    <property type="entry name" value="Mycoplasma_p37"/>
    <property type="match status" value="1"/>
</dbReference>
<dbReference type="PROSITE" id="PS51257">
    <property type="entry name" value="PROKAR_LIPOPROTEIN"/>
    <property type="match status" value="1"/>
</dbReference>
<organism>
    <name type="scientific">Mycoplasma genitalium (strain ATCC 33530 / DSM 19775 / NCTC 10195 / G37)</name>
    <name type="common">Mycoplasmoides genitalium</name>
    <dbReference type="NCBI Taxonomy" id="243273"/>
    <lineage>
        <taxon>Bacteria</taxon>
        <taxon>Bacillati</taxon>
        <taxon>Mycoplasmatota</taxon>
        <taxon>Mycoplasmoidales</taxon>
        <taxon>Mycoplasmoidaceae</taxon>
        <taxon>Mycoplasmoides</taxon>
    </lineage>
</organism>
<name>P37_MYCGE</name>
<gene>
    <name type="primary">p37</name>
    <name type="ordered locus">MG289</name>
</gene>
<feature type="signal peptide" evidence="1">
    <location>
        <begin position="1"/>
        <end position="25"/>
    </location>
</feature>
<feature type="chain" id="PRO_0000018094" description="High affinity transport system protein p37">
    <location>
        <begin position="26"/>
        <end position="368"/>
    </location>
</feature>
<feature type="lipid moiety-binding region" description="N-palmitoyl cysteine" evidence="2">
    <location>
        <position position="26"/>
    </location>
</feature>
<feature type="lipid moiety-binding region" description="S-diacylglycerol cysteine" evidence="2">
    <location>
        <position position="26"/>
    </location>
</feature>
<feature type="strand" evidence="3">
    <location>
        <begin position="33"/>
        <end position="38"/>
    </location>
</feature>
<feature type="helix" evidence="3">
    <location>
        <begin position="44"/>
        <end position="46"/>
    </location>
</feature>
<feature type="helix" evidence="3">
    <location>
        <begin position="48"/>
        <end position="63"/>
    </location>
</feature>
<feature type="strand" evidence="3">
    <location>
        <begin position="68"/>
        <end position="73"/>
    </location>
</feature>
<feature type="helix" evidence="3">
    <location>
        <begin position="77"/>
        <end position="85"/>
    </location>
</feature>
<feature type="strand" evidence="3">
    <location>
        <begin position="90"/>
        <end position="94"/>
    </location>
</feature>
<feature type="helix" evidence="3">
    <location>
        <begin position="96"/>
        <end position="98"/>
    </location>
</feature>
<feature type="strand" evidence="3">
    <location>
        <begin position="105"/>
        <end position="118"/>
    </location>
</feature>
<feature type="helix" evidence="3">
    <location>
        <begin position="127"/>
        <end position="129"/>
    </location>
</feature>
<feature type="helix" evidence="3">
    <location>
        <begin position="131"/>
        <end position="144"/>
    </location>
</feature>
<feature type="helix" evidence="3">
    <location>
        <begin position="148"/>
        <end position="150"/>
    </location>
</feature>
<feature type="turn" evidence="3">
    <location>
        <begin position="153"/>
        <end position="157"/>
    </location>
</feature>
<feature type="strand" evidence="3">
    <location>
        <begin position="160"/>
        <end position="163"/>
    </location>
</feature>
<feature type="helix" evidence="3">
    <location>
        <begin position="164"/>
        <end position="166"/>
    </location>
</feature>
<feature type="strand" evidence="3">
    <location>
        <begin position="167"/>
        <end position="185"/>
    </location>
</feature>
<feature type="helix" evidence="3">
    <location>
        <begin position="186"/>
        <end position="198"/>
    </location>
</feature>
<feature type="helix" evidence="3">
    <location>
        <begin position="201"/>
        <end position="205"/>
    </location>
</feature>
<feature type="strand" evidence="3">
    <location>
        <begin position="209"/>
        <end position="211"/>
    </location>
</feature>
<feature type="turn" evidence="3">
    <location>
        <begin position="217"/>
        <end position="220"/>
    </location>
</feature>
<feature type="helix" evidence="3">
    <location>
        <begin position="221"/>
        <end position="231"/>
    </location>
</feature>
<feature type="helix" evidence="3">
    <location>
        <begin position="238"/>
        <end position="244"/>
    </location>
</feature>
<feature type="helix" evidence="3">
    <location>
        <begin position="246"/>
        <end position="248"/>
    </location>
</feature>
<feature type="strand" evidence="3">
    <location>
        <begin position="249"/>
        <end position="251"/>
    </location>
</feature>
<feature type="helix" evidence="3">
    <location>
        <begin position="254"/>
        <end position="256"/>
    </location>
</feature>
<feature type="strand" evidence="3">
    <location>
        <begin position="265"/>
        <end position="269"/>
    </location>
</feature>
<feature type="helix" evidence="3">
    <location>
        <begin position="272"/>
        <end position="275"/>
    </location>
</feature>
<feature type="strand" evidence="3">
    <location>
        <begin position="294"/>
        <end position="306"/>
    </location>
</feature>
<feature type="strand" evidence="3">
    <location>
        <begin position="309"/>
        <end position="313"/>
    </location>
</feature>
<feature type="helix" evidence="3">
    <location>
        <begin position="318"/>
        <end position="333"/>
    </location>
</feature>
<feature type="helix" evidence="3">
    <location>
        <begin position="340"/>
        <end position="343"/>
    </location>
</feature>
<feature type="strand" evidence="3">
    <location>
        <begin position="347"/>
        <end position="350"/>
    </location>
</feature>
<feature type="helix" evidence="3">
    <location>
        <begin position="354"/>
        <end position="357"/>
    </location>
</feature>
<feature type="helix" evidence="3">
    <location>
        <begin position="359"/>
        <end position="366"/>
    </location>
</feature>
<comment type="function">
    <text>P37 is part of a high-affinity transport system.</text>
</comment>
<comment type="subcellular location">
    <subcellularLocation>
        <location>Cell membrane</location>
        <topology>Lipid-anchor</topology>
    </subcellularLocation>
</comment>